<keyword id="KW-0456">Lyase</keyword>
<keyword id="KW-0479">Metal-binding</keyword>
<dbReference type="EC" id="4.1.3.17"/>
<dbReference type="EC" id="4.1.1.112"/>
<dbReference type="EMBL" id="AE008923">
    <property type="protein sequence ID" value="AAM37652.1"/>
    <property type="molecule type" value="Genomic_DNA"/>
</dbReference>
<dbReference type="SMR" id="Q8PIT8"/>
<dbReference type="KEGG" id="xac:XAC2807"/>
<dbReference type="eggNOG" id="COG0684">
    <property type="taxonomic scope" value="Bacteria"/>
</dbReference>
<dbReference type="HOGENOM" id="CLU_072626_4_0_6"/>
<dbReference type="Proteomes" id="UP000000576">
    <property type="component" value="Chromosome"/>
</dbReference>
<dbReference type="GO" id="GO:0047443">
    <property type="term" value="F:4-hydroxy-4-methyl-2-oxoglutarate aldolase activity"/>
    <property type="evidence" value="ECO:0007669"/>
    <property type="project" value="UniProtKB-EC"/>
</dbReference>
<dbReference type="GO" id="GO:0046872">
    <property type="term" value="F:metal ion binding"/>
    <property type="evidence" value="ECO:0007669"/>
    <property type="project" value="UniProtKB-KW"/>
</dbReference>
<dbReference type="GO" id="GO:0008948">
    <property type="term" value="F:oxaloacetate decarboxylase activity"/>
    <property type="evidence" value="ECO:0007669"/>
    <property type="project" value="UniProtKB-EC"/>
</dbReference>
<dbReference type="GO" id="GO:0008428">
    <property type="term" value="F:ribonuclease inhibitor activity"/>
    <property type="evidence" value="ECO:0007669"/>
    <property type="project" value="InterPro"/>
</dbReference>
<dbReference type="GO" id="GO:0051252">
    <property type="term" value="P:regulation of RNA metabolic process"/>
    <property type="evidence" value="ECO:0007669"/>
    <property type="project" value="InterPro"/>
</dbReference>
<dbReference type="CDD" id="cd16841">
    <property type="entry name" value="RraA_family"/>
    <property type="match status" value="1"/>
</dbReference>
<dbReference type="Gene3D" id="3.50.30.40">
    <property type="entry name" value="Ribonuclease E inhibitor RraA/RraA-like"/>
    <property type="match status" value="1"/>
</dbReference>
<dbReference type="InterPro" id="IPR010203">
    <property type="entry name" value="RraA"/>
</dbReference>
<dbReference type="InterPro" id="IPR005493">
    <property type="entry name" value="RraA/RraA-like"/>
</dbReference>
<dbReference type="InterPro" id="IPR036704">
    <property type="entry name" value="RraA/RraA-like_sf"/>
</dbReference>
<dbReference type="NCBIfam" id="TIGR01935">
    <property type="entry name" value="NOT-MenG"/>
    <property type="match status" value="1"/>
</dbReference>
<dbReference type="NCBIfam" id="NF006875">
    <property type="entry name" value="PRK09372.1"/>
    <property type="match status" value="1"/>
</dbReference>
<dbReference type="NCBIfam" id="NF009134">
    <property type="entry name" value="PRK12487.1"/>
    <property type="match status" value="1"/>
</dbReference>
<dbReference type="PANTHER" id="PTHR33254">
    <property type="entry name" value="4-HYDROXY-4-METHYL-2-OXOGLUTARATE ALDOLASE 3-RELATED"/>
    <property type="match status" value="1"/>
</dbReference>
<dbReference type="PANTHER" id="PTHR33254:SF29">
    <property type="entry name" value="REGULATOR OF RIBONUCLEASE ACTIVITY A"/>
    <property type="match status" value="1"/>
</dbReference>
<dbReference type="Pfam" id="PF03737">
    <property type="entry name" value="RraA-like"/>
    <property type="match status" value="1"/>
</dbReference>
<dbReference type="SUPFAM" id="SSF89562">
    <property type="entry name" value="RraA-like"/>
    <property type="match status" value="1"/>
</dbReference>
<name>RRAAH_XANAC</name>
<evidence type="ECO:0000250" key="1"/>
<evidence type="ECO:0000305" key="2"/>
<accession>Q8PIT8</accession>
<comment type="function">
    <text evidence="1">Catalyzes the aldol cleavage of 4-hydroxy-4-methyl-2-oxoglutarate (HMG) into 2 molecules of pyruvate. Also contains a secondary oxaloacetate (OAA) decarboxylase activity due to the common pyruvate enolate transition state formed following C-C bond cleavage in the retro-aldol and decarboxylation reactions (By similarity).</text>
</comment>
<comment type="catalytic activity">
    <reaction>
        <text>4-hydroxy-4-methyl-2-oxoglutarate = 2 pyruvate</text>
        <dbReference type="Rhea" id="RHEA:22748"/>
        <dbReference type="ChEBI" id="CHEBI:15361"/>
        <dbReference type="ChEBI" id="CHEBI:58276"/>
        <dbReference type="EC" id="4.1.3.17"/>
    </reaction>
</comment>
<comment type="catalytic activity">
    <reaction>
        <text>oxaloacetate + H(+) = pyruvate + CO2</text>
        <dbReference type="Rhea" id="RHEA:15641"/>
        <dbReference type="ChEBI" id="CHEBI:15361"/>
        <dbReference type="ChEBI" id="CHEBI:15378"/>
        <dbReference type="ChEBI" id="CHEBI:16452"/>
        <dbReference type="ChEBI" id="CHEBI:16526"/>
        <dbReference type="EC" id="4.1.1.112"/>
    </reaction>
</comment>
<comment type="cofactor">
    <cofactor evidence="1">
        <name>a divalent metal cation</name>
        <dbReference type="ChEBI" id="CHEBI:60240"/>
    </cofactor>
    <text evidence="1">Divalent metal cation.</text>
</comment>
<comment type="subunit">
    <text evidence="1">Homotrimer.</text>
</comment>
<comment type="similarity">
    <text evidence="2">Belongs to the class II aldolase/RraA-like family.</text>
</comment>
<proteinExistence type="inferred from homology"/>
<reference key="1">
    <citation type="journal article" date="2002" name="Nature">
        <title>Comparison of the genomes of two Xanthomonas pathogens with differing host specificities.</title>
        <authorList>
            <person name="da Silva A.C.R."/>
            <person name="Ferro J.A."/>
            <person name="Reinach F.C."/>
            <person name="Farah C.S."/>
            <person name="Furlan L.R."/>
            <person name="Quaggio R.B."/>
            <person name="Monteiro-Vitorello C.B."/>
            <person name="Van Sluys M.A."/>
            <person name="Almeida N.F. Jr."/>
            <person name="Alves L.M.C."/>
            <person name="do Amaral A.M."/>
            <person name="Bertolini M.C."/>
            <person name="Camargo L.E.A."/>
            <person name="Camarotte G."/>
            <person name="Cannavan F."/>
            <person name="Cardozo J."/>
            <person name="Chambergo F."/>
            <person name="Ciapina L.P."/>
            <person name="Cicarelli R.M.B."/>
            <person name="Coutinho L.L."/>
            <person name="Cursino-Santos J.R."/>
            <person name="El-Dorry H."/>
            <person name="Faria J.B."/>
            <person name="Ferreira A.J.S."/>
            <person name="Ferreira R.C.C."/>
            <person name="Ferro M.I.T."/>
            <person name="Formighieri E.F."/>
            <person name="Franco M.C."/>
            <person name="Greggio C.C."/>
            <person name="Gruber A."/>
            <person name="Katsuyama A.M."/>
            <person name="Kishi L.T."/>
            <person name="Leite R.P."/>
            <person name="Lemos E.G.M."/>
            <person name="Lemos M.V.F."/>
            <person name="Locali E.C."/>
            <person name="Machado M.A."/>
            <person name="Madeira A.M.B.N."/>
            <person name="Martinez-Rossi N.M."/>
            <person name="Martins E.C."/>
            <person name="Meidanis J."/>
            <person name="Menck C.F.M."/>
            <person name="Miyaki C.Y."/>
            <person name="Moon D.H."/>
            <person name="Moreira L.M."/>
            <person name="Novo M.T.M."/>
            <person name="Okura V.K."/>
            <person name="Oliveira M.C."/>
            <person name="Oliveira V.R."/>
            <person name="Pereira H.A."/>
            <person name="Rossi A."/>
            <person name="Sena J.A.D."/>
            <person name="Silva C."/>
            <person name="de Souza R.F."/>
            <person name="Spinola L.A.F."/>
            <person name="Takita M.A."/>
            <person name="Tamura R.E."/>
            <person name="Teixeira E.C."/>
            <person name="Tezza R.I.D."/>
            <person name="Trindade dos Santos M."/>
            <person name="Truffi D."/>
            <person name="Tsai S.M."/>
            <person name="White F.F."/>
            <person name="Setubal J.C."/>
            <person name="Kitajima J.P."/>
        </authorList>
    </citation>
    <scope>NUCLEOTIDE SEQUENCE [LARGE SCALE GENOMIC DNA]</scope>
    <source>
        <strain>306</strain>
    </source>
</reference>
<protein>
    <recommendedName>
        <fullName>Putative 4-hydroxy-4-methyl-2-oxoglutarate aldolase</fullName>
        <shortName>HMG aldolase</shortName>
        <ecNumber>4.1.3.17</ecNumber>
    </recommendedName>
    <alternativeName>
        <fullName>Oxaloacetate decarboxylase</fullName>
        <shortName>OAA decarboxylase</shortName>
        <ecNumber>4.1.1.112</ecNumber>
    </alternativeName>
    <alternativeName>
        <fullName>Regulator of ribonuclease activity homolog</fullName>
    </alternativeName>
    <alternativeName>
        <fullName>RraA-like protein</fullName>
    </alternativeName>
</protein>
<sequence>MTWTTPDLCDRYPDAMIAEPLFRHFGGRTAFAGPLATVRCFEDNSRVRELAATPGDGRVLVVDGQGSLKHALLGDQIAANAVANGWAGVLIHGCVRDVEILATLPLGVLALAACPRRTERRDLGDVDVPVNFAGVPFVPGHWLYADANGVLVAPQPLALDGAGGSI</sequence>
<feature type="chain" id="PRO_0000209648" description="Putative 4-hydroxy-4-methyl-2-oxoglutarate aldolase">
    <location>
        <begin position="1"/>
        <end position="166"/>
    </location>
</feature>
<feature type="binding site" evidence="1">
    <location>
        <begin position="74"/>
        <end position="77"/>
    </location>
    <ligand>
        <name>substrate</name>
    </ligand>
</feature>
<feature type="binding site" evidence="1">
    <location>
        <position position="96"/>
    </location>
    <ligand>
        <name>substrate</name>
    </ligand>
</feature>
<feature type="binding site" evidence="1">
    <location>
        <position position="97"/>
    </location>
    <ligand>
        <name>a divalent metal cation</name>
        <dbReference type="ChEBI" id="CHEBI:60240"/>
    </ligand>
</feature>
<organism>
    <name type="scientific">Xanthomonas axonopodis pv. citri (strain 306)</name>
    <dbReference type="NCBI Taxonomy" id="190486"/>
    <lineage>
        <taxon>Bacteria</taxon>
        <taxon>Pseudomonadati</taxon>
        <taxon>Pseudomonadota</taxon>
        <taxon>Gammaproteobacteria</taxon>
        <taxon>Lysobacterales</taxon>
        <taxon>Lysobacteraceae</taxon>
        <taxon>Xanthomonas</taxon>
    </lineage>
</organism>
<gene>
    <name type="ordered locus">XAC2807</name>
</gene>